<reference key="1">
    <citation type="journal article" date="2000" name="Nature">
        <title>Complete DNA sequence of a serogroup A strain of Neisseria meningitidis Z2491.</title>
        <authorList>
            <person name="Parkhill J."/>
            <person name="Achtman M."/>
            <person name="James K.D."/>
            <person name="Bentley S.D."/>
            <person name="Churcher C.M."/>
            <person name="Klee S.R."/>
            <person name="Morelli G."/>
            <person name="Basham D."/>
            <person name="Brown D."/>
            <person name="Chillingworth T."/>
            <person name="Davies R.M."/>
            <person name="Davis P."/>
            <person name="Devlin K."/>
            <person name="Feltwell T."/>
            <person name="Hamlin N."/>
            <person name="Holroyd S."/>
            <person name="Jagels K."/>
            <person name="Leather S."/>
            <person name="Moule S."/>
            <person name="Mungall K.L."/>
            <person name="Quail M.A."/>
            <person name="Rajandream M.A."/>
            <person name="Rutherford K.M."/>
            <person name="Simmonds M."/>
            <person name="Skelton J."/>
            <person name="Whitehead S."/>
            <person name="Spratt B.G."/>
            <person name="Barrell B.G."/>
        </authorList>
    </citation>
    <scope>NUCLEOTIDE SEQUENCE [LARGE SCALE GENOMIC DNA]</scope>
    <source>
        <strain>DSM 15465 / Z2491</strain>
    </source>
</reference>
<keyword id="KW-0963">Cytoplasm</keyword>
<keyword id="KW-0235">DNA replication</keyword>
<keyword id="KW-0239">DNA-directed DNA polymerase</keyword>
<keyword id="KW-0548">Nucleotidyltransferase</keyword>
<keyword id="KW-0808">Transferase</keyword>
<evidence type="ECO:0000250" key="1"/>
<evidence type="ECO:0000305" key="2"/>
<proteinExistence type="inferred from homology"/>
<accession>Q9JVX8</accession>
<accession>A1IQ69</accession>
<protein>
    <recommendedName>
        <fullName>DNA polymerase III subunit alpha</fullName>
        <ecNumber>2.7.7.7</ecNumber>
    </recommendedName>
</protein>
<organism>
    <name type="scientific">Neisseria meningitidis serogroup A / serotype 4A (strain DSM 15465 / Z2491)</name>
    <dbReference type="NCBI Taxonomy" id="122587"/>
    <lineage>
        <taxon>Bacteria</taxon>
        <taxon>Pseudomonadati</taxon>
        <taxon>Pseudomonadota</taxon>
        <taxon>Betaproteobacteria</taxon>
        <taxon>Neisseriales</taxon>
        <taxon>Neisseriaceae</taxon>
        <taxon>Neisseria</taxon>
    </lineage>
</organism>
<name>DPO3A_NEIMA</name>
<dbReference type="EC" id="2.7.7.7"/>
<dbReference type="EMBL" id="AL157959">
    <property type="protein sequence ID" value="CAM07897.1"/>
    <property type="molecule type" value="Genomic_DNA"/>
</dbReference>
<dbReference type="PIR" id="A81983">
    <property type="entry name" value="A81983"/>
</dbReference>
<dbReference type="RefSeq" id="WP_002247062.1">
    <property type="nucleotide sequence ID" value="NC_003116.1"/>
</dbReference>
<dbReference type="SMR" id="Q9JVX8"/>
<dbReference type="EnsemblBacteria" id="CAM07897">
    <property type="protein sequence ID" value="CAM07897"/>
    <property type="gene ID" value="NMA0632"/>
</dbReference>
<dbReference type="KEGG" id="nma:NMA0632"/>
<dbReference type="HOGENOM" id="CLU_001600_0_0_4"/>
<dbReference type="Proteomes" id="UP000000626">
    <property type="component" value="Chromosome"/>
</dbReference>
<dbReference type="GO" id="GO:0005737">
    <property type="term" value="C:cytoplasm"/>
    <property type="evidence" value="ECO:0007669"/>
    <property type="project" value="UniProtKB-SubCell"/>
</dbReference>
<dbReference type="GO" id="GO:0008408">
    <property type="term" value="F:3'-5' exonuclease activity"/>
    <property type="evidence" value="ECO:0007669"/>
    <property type="project" value="InterPro"/>
</dbReference>
<dbReference type="GO" id="GO:0003887">
    <property type="term" value="F:DNA-directed DNA polymerase activity"/>
    <property type="evidence" value="ECO:0007669"/>
    <property type="project" value="UniProtKB-KW"/>
</dbReference>
<dbReference type="GO" id="GO:0003676">
    <property type="term" value="F:nucleic acid binding"/>
    <property type="evidence" value="ECO:0007669"/>
    <property type="project" value="InterPro"/>
</dbReference>
<dbReference type="GO" id="GO:0006260">
    <property type="term" value="P:DNA replication"/>
    <property type="evidence" value="ECO:0007669"/>
    <property type="project" value="UniProtKB-KW"/>
</dbReference>
<dbReference type="CDD" id="cd04485">
    <property type="entry name" value="DnaE_OBF"/>
    <property type="match status" value="1"/>
</dbReference>
<dbReference type="CDD" id="cd07433">
    <property type="entry name" value="PHP_PolIIIA_DnaE1"/>
    <property type="match status" value="1"/>
</dbReference>
<dbReference type="Gene3D" id="1.10.150.870">
    <property type="match status" value="1"/>
</dbReference>
<dbReference type="Gene3D" id="1.10.10.1600">
    <property type="entry name" value="Bacterial DNA polymerase III alpha subunit, thumb domain"/>
    <property type="match status" value="1"/>
</dbReference>
<dbReference type="Gene3D" id="3.20.20.140">
    <property type="entry name" value="Metal-dependent hydrolases"/>
    <property type="match status" value="1"/>
</dbReference>
<dbReference type="Gene3D" id="2.40.50.140">
    <property type="entry name" value="Nucleic acid-binding proteins"/>
    <property type="match status" value="1"/>
</dbReference>
<dbReference type="InterPro" id="IPR011708">
    <property type="entry name" value="DNA_pol3_alpha_NTPase_dom"/>
</dbReference>
<dbReference type="InterPro" id="IPR041931">
    <property type="entry name" value="DNA_pol3_alpha_thumb_dom"/>
</dbReference>
<dbReference type="InterPro" id="IPR040982">
    <property type="entry name" value="DNA_pol3_finger"/>
</dbReference>
<dbReference type="InterPro" id="IPR048472">
    <property type="entry name" value="DNA_pol_IIIA_C"/>
</dbReference>
<dbReference type="InterPro" id="IPR004805">
    <property type="entry name" value="DnaE2/DnaE/PolC"/>
</dbReference>
<dbReference type="InterPro" id="IPR029460">
    <property type="entry name" value="DNAPol_HHH"/>
</dbReference>
<dbReference type="InterPro" id="IPR012340">
    <property type="entry name" value="NA-bd_OB-fold"/>
</dbReference>
<dbReference type="InterPro" id="IPR004365">
    <property type="entry name" value="NA-bd_OB_tRNA"/>
</dbReference>
<dbReference type="InterPro" id="IPR004013">
    <property type="entry name" value="PHP_dom"/>
</dbReference>
<dbReference type="InterPro" id="IPR003141">
    <property type="entry name" value="Pol/His_phosphatase_N"/>
</dbReference>
<dbReference type="InterPro" id="IPR016195">
    <property type="entry name" value="Pol/histidinol_Pase-like"/>
</dbReference>
<dbReference type="InterPro" id="IPR049821">
    <property type="entry name" value="PolIIIA_DnaE1_PHP"/>
</dbReference>
<dbReference type="NCBIfam" id="TIGR00594">
    <property type="entry name" value="polc"/>
    <property type="match status" value="1"/>
</dbReference>
<dbReference type="NCBIfam" id="NF004226">
    <property type="entry name" value="PRK05673.1"/>
    <property type="match status" value="1"/>
</dbReference>
<dbReference type="PANTHER" id="PTHR32294">
    <property type="entry name" value="DNA POLYMERASE III SUBUNIT ALPHA"/>
    <property type="match status" value="1"/>
</dbReference>
<dbReference type="PANTHER" id="PTHR32294:SF0">
    <property type="entry name" value="DNA POLYMERASE III SUBUNIT ALPHA"/>
    <property type="match status" value="1"/>
</dbReference>
<dbReference type="Pfam" id="PF07733">
    <property type="entry name" value="DNA_pol3_alpha"/>
    <property type="match status" value="1"/>
</dbReference>
<dbReference type="Pfam" id="PF17657">
    <property type="entry name" value="DNA_pol3_finger"/>
    <property type="match status" value="1"/>
</dbReference>
<dbReference type="Pfam" id="PF20914">
    <property type="entry name" value="DNA_pol_IIIA_C"/>
    <property type="match status" value="1"/>
</dbReference>
<dbReference type="Pfam" id="PF14579">
    <property type="entry name" value="HHH_6"/>
    <property type="match status" value="1"/>
</dbReference>
<dbReference type="Pfam" id="PF02811">
    <property type="entry name" value="PHP"/>
    <property type="match status" value="1"/>
</dbReference>
<dbReference type="Pfam" id="PF01336">
    <property type="entry name" value="tRNA_anti-codon"/>
    <property type="match status" value="1"/>
</dbReference>
<dbReference type="SMART" id="SM00481">
    <property type="entry name" value="POLIIIAc"/>
    <property type="match status" value="1"/>
</dbReference>
<dbReference type="SUPFAM" id="SSF89550">
    <property type="entry name" value="PHP domain-like"/>
    <property type="match status" value="1"/>
</dbReference>
<feature type="chain" id="PRO_0000103331" description="DNA polymerase III subunit alpha">
    <location>
        <begin position="1"/>
        <end position="1144"/>
    </location>
</feature>
<comment type="function">
    <text evidence="1">DNA polymerase III is a complex, multichain enzyme responsible for most of the replicative synthesis in bacteria. This DNA polymerase also exhibits 3' to 5' exonuclease activity. The alpha chain is the DNA polymerase (By similarity).</text>
</comment>
<comment type="catalytic activity">
    <reaction>
        <text>DNA(n) + a 2'-deoxyribonucleoside 5'-triphosphate = DNA(n+1) + diphosphate</text>
        <dbReference type="Rhea" id="RHEA:22508"/>
        <dbReference type="Rhea" id="RHEA-COMP:17339"/>
        <dbReference type="Rhea" id="RHEA-COMP:17340"/>
        <dbReference type="ChEBI" id="CHEBI:33019"/>
        <dbReference type="ChEBI" id="CHEBI:61560"/>
        <dbReference type="ChEBI" id="CHEBI:173112"/>
        <dbReference type="EC" id="2.7.7.7"/>
    </reaction>
</comment>
<comment type="subunit">
    <text evidence="1">DNA polymerase III contains a core (composed of alpha, epsilon and theta chains) that associates with a tau subunit. This core dimerizes to form the PolIII' complex. PolIII' associates with the gamma complex (composed of gamma, delta, delta', psi and chi chains) and with the beta chain to form the complete DNA polymerase III complex (By similarity).</text>
</comment>
<comment type="subcellular location">
    <subcellularLocation>
        <location evidence="1">Cytoplasm</location>
    </subcellularLocation>
</comment>
<comment type="similarity">
    <text evidence="2">Belongs to the DNA polymerase type-C family. DnaE subfamily.</text>
</comment>
<gene>
    <name type="primary">dnaE</name>
    <name type="ordered locus">NMA0632</name>
</gene>
<sequence>MTEPTYIPLRLHTEFSITDGMVRIKKLIAKAQEYGLPALGISDLMNEFGLVKFYKACRSAGIKPIGAADVRIGNPDAPDKPFRAMLIIRNDAGYLRLSELLTAAYVGKDRNVHHAELNPEWLENGDNSGLICLSGAHYGEVGVNLLNGNEDAARAAALKYAAWFPDAFYLELQRLPERPEWEACVSGSVKLAEELGLPVVATHPTQFMSRDDFNAHEARVCIAGGWVLTDKKRPRDFTPSQFFIPPETMAERFSDLPEALENTVEIAKRCNLHITLGKNFLPLFPTPDGLSLDDYLVKLSNEGLQERMVQLYPDEAERAAKMPEYQERLDFELNIIIQMKFPGYFLIVQDFINWAKTHGCPVGPGRGSGAGSLVAYSLKITDLDPLKYALLFERFLNPERVSMPDFDVDFCQANRGRVIEYVREKYGAEAVSQIVTFGTMSSKAVIRDVGRVLELPFTLCDKLSKLIPLEANKPLGLDDAMKAEPQIQELIEAEEADELITLAKKLEDLTRGLGMHAGGVLIAPGKISDYSPVYQADESASPVSMYDKGDVEDVGLVKFDFLGLRNLTIIEMAQNNIKNTTGDIVDVGTIPLDDQTAYQIFRDANTTAVFQFESTGMKKMLKTAHTTKFEELIAFVSLYRPGPMDNIPDFVARMKGQEFQYIHPLLEGILAPTYGIMVYQEQVMQAAQIIGGYSLGGADLLRRAMGKKKPEEMVKHREIFAEGAAKQGISREKSDEIFNYMEKFAGYGFNKSHAAAYALISYQTAWLKAHYPAEFMAATMSSELDNTDQLKHFYDDCRANGIEFLPPDINESDYRFTPYPDMKIRYALGAIKGTGEAAVESITSARQSGGKFTGLLDFCERVGKEHMNRRTLEALIRGGAFDSIEPNRAMLLANIDLAMNNADQKAANANQGGLFDMMEDAIEPVRLIDAPMWSESEKLAEEKTVIGFYLSGHPFGPYAQEVRQIAPQKLSKLKPQDSVRLAGFVTAVRTMMGKRGKIAFVSLEDLSGQVEIMVGGQTLENCADCLKADQVLIIESKVSRDDYGGGDGLRILANQVMTLQTARERYARSLSLALAPHHDIGELVQLLAAHQLPDTPRIPLQLSYANEKASGRLQVPPKWTVTPSSALFGELETLLGSRSVRVNW</sequence>